<sequence length="734" mass="79862">MENKKTKLTLSGIAKKSIENIELAKTQSKNSVVIEKKPSKFAPRSSFTRPASVRSKPAVSTTSSFPPRTASVPKPASPITNDYEKRKLAEQRATRRLKGDTGKPETKKRELKLTVSRALSDEIEARSRSMASLKRAKLKENRELTKEEIQESLKPVKRDVNIPEAITVRELSNRMAEQSSNVIKHLFGMGVTVTINQTLAADTAEYLVKEFGHNPIRETKAEEIIQKIKESRSENLKNRPPIVTVMGHVDHGKTSVLDVLRSANVVSGEFGGITQHIGAYQIQHESNKLTFIDTPGHAAFTEMRARGSKLTDVVVLVVAADDGVKPQTIESIKHAKAANVPIVVAINKCDLPEADPQKIKNQLLEYELIAEDLSGDTLMVEISAKNKKNLDKLVESIVLQAEILDLKTDFESKATGIVLESKIDIGRGAVATVVVTSGTIKKGDFFVSGLKWGKVRALINDKGENVNEAPPSMPVEILGINGAAKSGDDFIVLDSEKEAKTLSQNRAEESKTGGSPLTFATQDSAFADKSAAELNIIVKSDVHGSAEAIKSAINQITHDEVKPKIILSDIGMVTETDVTLAKASNAALIAFNVKPSKEAKKLAENEKIVISSYNIIYEVLDYIKLRMSGLLAPDVQEKIIGTAQILEIFKVSGTGKVAGSKVTEGEITSGASARVVRDGAIIYTGKISTIFREKDQAKQVSNGQECGITLKDFIDFQKNDTIEAFSTTTTDRTV</sequence>
<protein>
    <recommendedName>
        <fullName evidence="2">Translation initiation factor IF-2</fullName>
    </recommendedName>
</protein>
<proteinExistence type="inferred from homology"/>
<name>IF2_PELUB</name>
<gene>
    <name evidence="2" type="primary">infB</name>
    <name type="ordered locus">SAR11_0389</name>
</gene>
<organism>
    <name type="scientific">Pelagibacter ubique (strain HTCC1062)</name>
    <dbReference type="NCBI Taxonomy" id="335992"/>
    <lineage>
        <taxon>Bacteria</taxon>
        <taxon>Pseudomonadati</taxon>
        <taxon>Pseudomonadota</taxon>
        <taxon>Alphaproteobacteria</taxon>
        <taxon>Candidatus Pelagibacterales</taxon>
        <taxon>Candidatus Pelagibacteraceae</taxon>
        <taxon>Candidatus Pelagibacter</taxon>
    </lineage>
</organism>
<accession>Q4FNM9</accession>
<dbReference type="EMBL" id="CP000084">
    <property type="protein sequence ID" value="AAZ21210.1"/>
    <property type="molecule type" value="Genomic_DNA"/>
</dbReference>
<dbReference type="RefSeq" id="WP_011281674.1">
    <property type="nucleotide sequence ID" value="NC_007205.1"/>
</dbReference>
<dbReference type="SMR" id="Q4FNM9"/>
<dbReference type="STRING" id="335992.SAR11_0389"/>
<dbReference type="GeneID" id="66294886"/>
<dbReference type="KEGG" id="pub:SAR11_0389"/>
<dbReference type="eggNOG" id="COG0532">
    <property type="taxonomic scope" value="Bacteria"/>
</dbReference>
<dbReference type="HOGENOM" id="CLU_006301_5_1_5"/>
<dbReference type="OrthoDB" id="9811804at2"/>
<dbReference type="Proteomes" id="UP000002528">
    <property type="component" value="Chromosome"/>
</dbReference>
<dbReference type="GO" id="GO:0005737">
    <property type="term" value="C:cytoplasm"/>
    <property type="evidence" value="ECO:0007669"/>
    <property type="project" value="UniProtKB-SubCell"/>
</dbReference>
<dbReference type="GO" id="GO:0005525">
    <property type="term" value="F:GTP binding"/>
    <property type="evidence" value="ECO:0007669"/>
    <property type="project" value="UniProtKB-KW"/>
</dbReference>
<dbReference type="GO" id="GO:0003924">
    <property type="term" value="F:GTPase activity"/>
    <property type="evidence" value="ECO:0007669"/>
    <property type="project" value="UniProtKB-UniRule"/>
</dbReference>
<dbReference type="GO" id="GO:0003743">
    <property type="term" value="F:translation initiation factor activity"/>
    <property type="evidence" value="ECO:0007669"/>
    <property type="project" value="UniProtKB-UniRule"/>
</dbReference>
<dbReference type="CDD" id="cd01887">
    <property type="entry name" value="IF2_eIF5B"/>
    <property type="match status" value="1"/>
</dbReference>
<dbReference type="CDD" id="cd03702">
    <property type="entry name" value="IF2_mtIF2_II"/>
    <property type="match status" value="1"/>
</dbReference>
<dbReference type="CDD" id="cd03692">
    <property type="entry name" value="mtIF2_IVc"/>
    <property type="match status" value="1"/>
</dbReference>
<dbReference type="FunFam" id="2.40.30.10:FF:000008">
    <property type="entry name" value="Translation initiation factor IF-2"/>
    <property type="match status" value="1"/>
</dbReference>
<dbReference type="FunFam" id="2.40.30.10:FF:000054">
    <property type="entry name" value="Translation initiation factor IF-2"/>
    <property type="match status" value="1"/>
</dbReference>
<dbReference type="FunFam" id="3.40.50.10050:FF:000001">
    <property type="entry name" value="Translation initiation factor IF-2"/>
    <property type="match status" value="1"/>
</dbReference>
<dbReference type="FunFam" id="3.40.50.300:FF:000019">
    <property type="entry name" value="Translation initiation factor IF-2"/>
    <property type="match status" value="1"/>
</dbReference>
<dbReference type="Gene3D" id="3.40.50.300">
    <property type="entry name" value="P-loop containing nucleotide triphosphate hydrolases"/>
    <property type="match status" value="1"/>
</dbReference>
<dbReference type="Gene3D" id="2.40.30.10">
    <property type="entry name" value="Translation factors"/>
    <property type="match status" value="2"/>
</dbReference>
<dbReference type="Gene3D" id="3.40.50.10050">
    <property type="entry name" value="Translation initiation factor IF- 2, domain 3"/>
    <property type="match status" value="1"/>
</dbReference>
<dbReference type="HAMAP" id="MF_00100_B">
    <property type="entry name" value="IF_2_B"/>
    <property type="match status" value="1"/>
</dbReference>
<dbReference type="InterPro" id="IPR053905">
    <property type="entry name" value="EF-G-like_DII"/>
</dbReference>
<dbReference type="InterPro" id="IPR044145">
    <property type="entry name" value="IF2_II"/>
</dbReference>
<dbReference type="InterPro" id="IPR006847">
    <property type="entry name" value="IF2_N"/>
</dbReference>
<dbReference type="InterPro" id="IPR027417">
    <property type="entry name" value="P-loop_NTPase"/>
</dbReference>
<dbReference type="InterPro" id="IPR005225">
    <property type="entry name" value="Small_GTP-bd"/>
</dbReference>
<dbReference type="InterPro" id="IPR000795">
    <property type="entry name" value="T_Tr_GTP-bd_dom"/>
</dbReference>
<dbReference type="InterPro" id="IPR000178">
    <property type="entry name" value="TF_IF2_bacterial-like"/>
</dbReference>
<dbReference type="InterPro" id="IPR015760">
    <property type="entry name" value="TIF_IF2"/>
</dbReference>
<dbReference type="InterPro" id="IPR023115">
    <property type="entry name" value="TIF_IF2_dom3"/>
</dbReference>
<dbReference type="InterPro" id="IPR036925">
    <property type="entry name" value="TIF_IF2_dom3_sf"/>
</dbReference>
<dbReference type="InterPro" id="IPR009000">
    <property type="entry name" value="Transl_B-barrel_sf"/>
</dbReference>
<dbReference type="NCBIfam" id="TIGR00487">
    <property type="entry name" value="IF-2"/>
    <property type="match status" value="1"/>
</dbReference>
<dbReference type="NCBIfam" id="TIGR00231">
    <property type="entry name" value="small_GTP"/>
    <property type="match status" value="1"/>
</dbReference>
<dbReference type="PANTHER" id="PTHR43381:SF5">
    <property type="entry name" value="TR-TYPE G DOMAIN-CONTAINING PROTEIN"/>
    <property type="match status" value="1"/>
</dbReference>
<dbReference type="PANTHER" id="PTHR43381">
    <property type="entry name" value="TRANSLATION INITIATION FACTOR IF-2-RELATED"/>
    <property type="match status" value="1"/>
</dbReference>
<dbReference type="Pfam" id="PF22042">
    <property type="entry name" value="EF-G_D2"/>
    <property type="match status" value="1"/>
</dbReference>
<dbReference type="Pfam" id="PF00009">
    <property type="entry name" value="GTP_EFTU"/>
    <property type="match status" value="1"/>
</dbReference>
<dbReference type="Pfam" id="PF11987">
    <property type="entry name" value="IF-2"/>
    <property type="match status" value="1"/>
</dbReference>
<dbReference type="Pfam" id="PF04760">
    <property type="entry name" value="IF2_N"/>
    <property type="match status" value="1"/>
</dbReference>
<dbReference type="PRINTS" id="PR00449">
    <property type="entry name" value="RASTRNSFRMNG"/>
</dbReference>
<dbReference type="SUPFAM" id="SSF52156">
    <property type="entry name" value="Initiation factor IF2/eIF5b, domain 3"/>
    <property type="match status" value="1"/>
</dbReference>
<dbReference type="SUPFAM" id="SSF52540">
    <property type="entry name" value="P-loop containing nucleoside triphosphate hydrolases"/>
    <property type="match status" value="1"/>
</dbReference>
<dbReference type="SUPFAM" id="SSF50447">
    <property type="entry name" value="Translation proteins"/>
    <property type="match status" value="2"/>
</dbReference>
<dbReference type="PROSITE" id="PS51722">
    <property type="entry name" value="G_TR_2"/>
    <property type="match status" value="1"/>
</dbReference>
<reference key="1">
    <citation type="journal article" date="2005" name="Science">
        <title>Genome streamlining in a cosmopolitan oceanic bacterium.</title>
        <authorList>
            <person name="Giovannoni S.J."/>
            <person name="Tripp H.J."/>
            <person name="Givan S."/>
            <person name="Podar M."/>
            <person name="Vergin K.L."/>
            <person name="Baptista D."/>
            <person name="Bibbs L."/>
            <person name="Eads J."/>
            <person name="Richardson T.H."/>
            <person name="Noordewier M."/>
            <person name="Rappe M.S."/>
            <person name="Short J.M."/>
            <person name="Carrington J.C."/>
            <person name="Mathur E.J."/>
        </authorList>
    </citation>
    <scope>NUCLEOTIDE SEQUENCE [LARGE SCALE GENOMIC DNA]</scope>
    <source>
        <strain>HTCC1062</strain>
    </source>
</reference>
<comment type="function">
    <text evidence="2">One of the essential components for the initiation of protein synthesis. Protects formylmethionyl-tRNA from spontaneous hydrolysis and promotes its binding to the 30S ribosomal subunits. Also involved in the hydrolysis of GTP during the formation of the 70S ribosomal complex.</text>
</comment>
<comment type="subcellular location">
    <subcellularLocation>
        <location evidence="2">Cytoplasm</location>
    </subcellularLocation>
</comment>
<comment type="similarity">
    <text evidence="2">Belongs to the TRAFAC class translation factor GTPase superfamily. Classic translation factor GTPase family. IF-2 subfamily.</text>
</comment>
<evidence type="ECO:0000250" key="1"/>
<evidence type="ECO:0000255" key="2">
    <source>
        <dbReference type="HAMAP-Rule" id="MF_00100"/>
    </source>
</evidence>
<evidence type="ECO:0000256" key="3">
    <source>
        <dbReference type="SAM" id="MobiDB-lite"/>
    </source>
</evidence>
<feature type="chain" id="PRO_0000228222" description="Translation initiation factor IF-2">
    <location>
        <begin position="1"/>
        <end position="734"/>
    </location>
</feature>
<feature type="domain" description="tr-type G">
    <location>
        <begin position="238"/>
        <end position="405"/>
    </location>
</feature>
<feature type="region of interest" description="Disordered" evidence="3">
    <location>
        <begin position="39"/>
        <end position="110"/>
    </location>
</feature>
<feature type="region of interest" description="G1" evidence="1">
    <location>
        <begin position="247"/>
        <end position="254"/>
    </location>
</feature>
<feature type="region of interest" description="G2" evidence="1">
    <location>
        <begin position="272"/>
        <end position="276"/>
    </location>
</feature>
<feature type="region of interest" description="G3" evidence="1">
    <location>
        <begin position="293"/>
        <end position="296"/>
    </location>
</feature>
<feature type="region of interest" description="G4" evidence="1">
    <location>
        <begin position="347"/>
        <end position="350"/>
    </location>
</feature>
<feature type="region of interest" description="G5" evidence="1">
    <location>
        <begin position="383"/>
        <end position="385"/>
    </location>
</feature>
<feature type="compositionally biased region" description="Basic and acidic residues" evidence="3">
    <location>
        <begin position="82"/>
        <end position="110"/>
    </location>
</feature>
<feature type="binding site" evidence="2">
    <location>
        <begin position="247"/>
        <end position="254"/>
    </location>
    <ligand>
        <name>GTP</name>
        <dbReference type="ChEBI" id="CHEBI:37565"/>
    </ligand>
</feature>
<feature type="binding site" evidence="2">
    <location>
        <begin position="293"/>
        <end position="297"/>
    </location>
    <ligand>
        <name>GTP</name>
        <dbReference type="ChEBI" id="CHEBI:37565"/>
    </ligand>
</feature>
<feature type="binding site" evidence="2">
    <location>
        <begin position="347"/>
        <end position="350"/>
    </location>
    <ligand>
        <name>GTP</name>
        <dbReference type="ChEBI" id="CHEBI:37565"/>
    </ligand>
</feature>
<keyword id="KW-0963">Cytoplasm</keyword>
<keyword id="KW-0342">GTP-binding</keyword>
<keyword id="KW-0396">Initiation factor</keyword>
<keyword id="KW-0547">Nucleotide-binding</keyword>
<keyword id="KW-0648">Protein biosynthesis</keyword>
<keyword id="KW-1185">Reference proteome</keyword>